<comment type="function">
    <text evidence="1">Has an important function as a repair enzyme for proteins that have been inactivated by oxidation. Catalyzes the reversible oxidation-reduction of methionine sulfoxide in proteins to methionine (By similarity).</text>
</comment>
<comment type="catalytic activity">
    <reaction>
        <text>L-methionyl-[protein] + [thioredoxin]-disulfide + H2O = L-methionyl-(S)-S-oxide-[protein] + [thioredoxin]-dithiol</text>
        <dbReference type="Rhea" id="RHEA:14217"/>
        <dbReference type="Rhea" id="RHEA-COMP:10698"/>
        <dbReference type="Rhea" id="RHEA-COMP:10700"/>
        <dbReference type="Rhea" id="RHEA-COMP:12313"/>
        <dbReference type="Rhea" id="RHEA-COMP:12315"/>
        <dbReference type="ChEBI" id="CHEBI:15377"/>
        <dbReference type="ChEBI" id="CHEBI:16044"/>
        <dbReference type="ChEBI" id="CHEBI:29950"/>
        <dbReference type="ChEBI" id="CHEBI:44120"/>
        <dbReference type="ChEBI" id="CHEBI:50058"/>
        <dbReference type="EC" id="1.8.4.11"/>
    </reaction>
</comment>
<comment type="catalytic activity">
    <reaction>
        <text>[thioredoxin]-disulfide + L-methionine + H2O = L-methionine (S)-S-oxide + [thioredoxin]-dithiol</text>
        <dbReference type="Rhea" id="RHEA:19993"/>
        <dbReference type="Rhea" id="RHEA-COMP:10698"/>
        <dbReference type="Rhea" id="RHEA-COMP:10700"/>
        <dbReference type="ChEBI" id="CHEBI:15377"/>
        <dbReference type="ChEBI" id="CHEBI:29950"/>
        <dbReference type="ChEBI" id="CHEBI:50058"/>
        <dbReference type="ChEBI" id="CHEBI:57844"/>
        <dbReference type="ChEBI" id="CHEBI:58772"/>
        <dbReference type="EC" id="1.8.4.11"/>
    </reaction>
</comment>
<comment type="similarity">
    <text evidence="2">Belongs to the MsrA Met sulfoxide reductase family.</text>
</comment>
<comment type="sequence caution" evidence="2">
    <conflict type="erroneous initiation">
        <sequence resource="EMBL-CDS" id="AAN83738"/>
    </conflict>
</comment>
<protein>
    <recommendedName>
        <fullName>Peptide methionine sulfoxide reductase MsrA</fullName>
        <shortName>Protein-methionine-S-oxide reductase</shortName>
        <ecNumber>1.8.4.11</ecNumber>
    </recommendedName>
    <alternativeName>
        <fullName>Peptide-methionine (S)-S-oxide reductase</fullName>
        <shortName>Peptide Met(O) reductase</shortName>
    </alternativeName>
</protein>
<organism>
    <name type="scientific">Escherichia coli O6:H1 (strain CFT073 / ATCC 700928 / UPEC)</name>
    <dbReference type="NCBI Taxonomy" id="199310"/>
    <lineage>
        <taxon>Bacteria</taxon>
        <taxon>Pseudomonadati</taxon>
        <taxon>Pseudomonadota</taxon>
        <taxon>Gammaproteobacteria</taxon>
        <taxon>Enterobacterales</taxon>
        <taxon>Enterobacteriaceae</taxon>
        <taxon>Escherichia</taxon>
    </lineage>
</organism>
<keyword id="KW-1015">Disulfide bond</keyword>
<keyword id="KW-0560">Oxidoreductase</keyword>
<keyword id="KW-1185">Reference proteome</keyword>
<accession>Q8FAG4</accession>
<proteinExistence type="inferred from homology"/>
<feature type="initiator methionine" description="Removed" evidence="1">
    <location>
        <position position="1"/>
    </location>
</feature>
<feature type="chain" id="PRO_0000138548" description="Peptide methionine sulfoxide reductase MsrA">
    <location>
        <begin position="2"/>
        <end position="212"/>
    </location>
</feature>
<feature type="active site" description="Cysteine sulfenic acid (-SOH) intermediate" evidence="1">
    <location>
        <position position="52"/>
    </location>
</feature>
<feature type="disulfide bond" description="Redox-active; alternate" evidence="1">
    <location>
        <begin position="52"/>
        <end position="199"/>
    </location>
</feature>
<feature type="disulfide bond" description="Redox-active; alternate" evidence="1">
    <location>
        <begin position="199"/>
        <end position="207"/>
    </location>
</feature>
<evidence type="ECO:0000250" key="1"/>
<evidence type="ECO:0000305" key="2"/>
<name>MSRA_ECOL6</name>
<sequence length="212" mass="23376">MSLFDKKHLVSPADALPGRNTPMPVATLHAVNGHSMTNVPDGMEIAIFAMGCFWGVERLFWQLPGVYSTAAVYTGGYTPNPTYREVCSGDTGHAEAVRIVYDPSVISYEQLLQVFWENHDPAQGMRQGNDHGTQYRSAIYPLTPEQDAAARASLERFQAAMLAADDDRRITTEIANATPFYYAEDDHQQYLHKNPYGYCGIGGIGVCLPPEA</sequence>
<dbReference type="EC" id="1.8.4.11"/>
<dbReference type="EMBL" id="AE014075">
    <property type="protein sequence ID" value="AAN83738.1"/>
    <property type="status" value="ALT_INIT"/>
    <property type="molecule type" value="Genomic_DNA"/>
</dbReference>
<dbReference type="RefSeq" id="WP_001443156.1">
    <property type="nucleotide sequence ID" value="NZ_CP051263.1"/>
</dbReference>
<dbReference type="SMR" id="Q8FAG4"/>
<dbReference type="STRING" id="199310.c5317"/>
<dbReference type="KEGG" id="ecc:c5317"/>
<dbReference type="eggNOG" id="COG0225">
    <property type="taxonomic scope" value="Bacteria"/>
</dbReference>
<dbReference type="HOGENOM" id="CLU_031040_10_3_6"/>
<dbReference type="Proteomes" id="UP000001410">
    <property type="component" value="Chromosome"/>
</dbReference>
<dbReference type="GO" id="GO:0005737">
    <property type="term" value="C:cytoplasm"/>
    <property type="evidence" value="ECO:0007669"/>
    <property type="project" value="TreeGrafter"/>
</dbReference>
<dbReference type="GO" id="GO:0036456">
    <property type="term" value="F:L-methionine-(S)-S-oxide reductase activity"/>
    <property type="evidence" value="ECO:0007669"/>
    <property type="project" value="TreeGrafter"/>
</dbReference>
<dbReference type="GO" id="GO:0008113">
    <property type="term" value="F:peptide-methionine (S)-S-oxide reductase activity"/>
    <property type="evidence" value="ECO:0007669"/>
    <property type="project" value="UniProtKB-UniRule"/>
</dbReference>
<dbReference type="GO" id="GO:0034599">
    <property type="term" value="P:cellular response to oxidative stress"/>
    <property type="evidence" value="ECO:0007669"/>
    <property type="project" value="TreeGrafter"/>
</dbReference>
<dbReference type="GO" id="GO:0036211">
    <property type="term" value="P:protein modification process"/>
    <property type="evidence" value="ECO:0007669"/>
    <property type="project" value="UniProtKB-UniRule"/>
</dbReference>
<dbReference type="FunFam" id="3.30.1060.10:FF:000001">
    <property type="entry name" value="Peptide methionine sulfoxide reductase MsrA"/>
    <property type="match status" value="1"/>
</dbReference>
<dbReference type="Gene3D" id="3.30.1060.10">
    <property type="entry name" value="Peptide methionine sulphoxide reductase MsrA"/>
    <property type="match status" value="1"/>
</dbReference>
<dbReference type="HAMAP" id="MF_01401">
    <property type="entry name" value="MsrA"/>
    <property type="match status" value="1"/>
</dbReference>
<dbReference type="InterPro" id="IPR002569">
    <property type="entry name" value="Met_Sox_Rdtase_MsrA_dom"/>
</dbReference>
<dbReference type="InterPro" id="IPR036509">
    <property type="entry name" value="Met_Sox_Rdtase_MsrA_sf"/>
</dbReference>
<dbReference type="InterPro" id="IPR050162">
    <property type="entry name" value="MsrA_MetSO_reductase"/>
</dbReference>
<dbReference type="NCBIfam" id="TIGR00401">
    <property type="entry name" value="msrA"/>
    <property type="match status" value="1"/>
</dbReference>
<dbReference type="PANTHER" id="PTHR42799">
    <property type="entry name" value="MITOCHONDRIAL PEPTIDE METHIONINE SULFOXIDE REDUCTASE"/>
    <property type="match status" value="1"/>
</dbReference>
<dbReference type="PANTHER" id="PTHR42799:SF2">
    <property type="entry name" value="MITOCHONDRIAL PEPTIDE METHIONINE SULFOXIDE REDUCTASE"/>
    <property type="match status" value="1"/>
</dbReference>
<dbReference type="Pfam" id="PF01625">
    <property type="entry name" value="PMSR"/>
    <property type="match status" value="1"/>
</dbReference>
<dbReference type="SUPFAM" id="SSF55068">
    <property type="entry name" value="Peptide methionine sulfoxide reductase"/>
    <property type="match status" value="1"/>
</dbReference>
<reference key="1">
    <citation type="journal article" date="2002" name="Proc. Natl. Acad. Sci. U.S.A.">
        <title>Extensive mosaic structure revealed by the complete genome sequence of uropathogenic Escherichia coli.</title>
        <authorList>
            <person name="Welch R.A."/>
            <person name="Burland V."/>
            <person name="Plunkett G. III"/>
            <person name="Redford P."/>
            <person name="Roesch P."/>
            <person name="Rasko D."/>
            <person name="Buckles E.L."/>
            <person name="Liou S.-R."/>
            <person name="Boutin A."/>
            <person name="Hackett J."/>
            <person name="Stroud D."/>
            <person name="Mayhew G.F."/>
            <person name="Rose D.J."/>
            <person name="Zhou S."/>
            <person name="Schwartz D.C."/>
            <person name="Perna N.T."/>
            <person name="Mobley H.L.T."/>
            <person name="Donnenberg M.S."/>
            <person name="Blattner F.R."/>
        </authorList>
    </citation>
    <scope>NUCLEOTIDE SEQUENCE [LARGE SCALE GENOMIC DNA]</scope>
    <source>
        <strain>CFT073 / ATCC 700928 / UPEC</strain>
    </source>
</reference>
<gene>
    <name type="primary">msrA</name>
    <name type="ordered locus">c5317</name>
</gene>